<gene>
    <name type="primary">flp</name>
    <name type="ordered locus">SAOUHSC_02736</name>
</gene>
<protein>
    <recommendedName>
        <fullName>Protein flp</fullName>
    </recommendedName>
    <alternativeName>
        <fullName>FmtA-like protein</fullName>
    </alternativeName>
</protein>
<keyword id="KW-1003">Cell membrane</keyword>
<keyword id="KW-0472">Membrane</keyword>
<keyword id="KW-1185">Reference proteome</keyword>
<keyword id="KW-0812">Transmembrane</keyword>
<keyword id="KW-1133">Transmembrane helix</keyword>
<comment type="function">
    <text evidence="2">Its precise function is unknown. Has no penicillin-binding activity and is not involved in methicillin resistance.</text>
</comment>
<comment type="subcellular location">
    <subcellularLocation>
        <location evidence="3">Cell membrane</location>
        <topology evidence="3">Multi-pass membrane protein</topology>
    </subcellularLocation>
</comment>
<comment type="miscellaneous">
    <text>Has two of three conserved motifs typically found in penicillin-binding proteins (PBPs) and beta-lactamases, but no penicillin-binding activity has been detected.</text>
</comment>
<name>FLP_STAA8</name>
<evidence type="ECO:0000255" key="1"/>
<evidence type="ECO:0000269" key="2">
    <source>
    </source>
</evidence>
<evidence type="ECO:0000305" key="3"/>
<dbReference type="EMBL" id="CP000253">
    <property type="protein sequence ID" value="ABD31742.1"/>
    <property type="molecule type" value="Genomic_DNA"/>
</dbReference>
<dbReference type="RefSeq" id="WP_000208575.1">
    <property type="nucleotide sequence ID" value="NZ_LS483365.1"/>
</dbReference>
<dbReference type="RefSeq" id="YP_501197.1">
    <property type="nucleotide sequence ID" value="NC_007795.1"/>
</dbReference>
<dbReference type="SMR" id="Q2FVH6"/>
<dbReference type="STRING" id="93061.SAOUHSC_02736"/>
<dbReference type="MEROPS" id="S12.011"/>
<dbReference type="PaxDb" id="1280-SAXN108_2696"/>
<dbReference type="GeneID" id="3921610"/>
<dbReference type="KEGG" id="sao:SAOUHSC_02736"/>
<dbReference type="PATRIC" id="fig|93061.5.peg.2475"/>
<dbReference type="eggNOG" id="COG1680">
    <property type="taxonomic scope" value="Bacteria"/>
</dbReference>
<dbReference type="HOGENOM" id="CLU_020027_4_2_9"/>
<dbReference type="OrthoDB" id="846150at2"/>
<dbReference type="PRO" id="PR:Q2FVH6"/>
<dbReference type="Proteomes" id="UP000008816">
    <property type="component" value="Chromosome"/>
</dbReference>
<dbReference type="GO" id="GO:0005886">
    <property type="term" value="C:plasma membrane"/>
    <property type="evidence" value="ECO:0007669"/>
    <property type="project" value="UniProtKB-SubCell"/>
</dbReference>
<dbReference type="Gene3D" id="3.40.710.10">
    <property type="entry name" value="DD-peptidase/beta-lactamase superfamily"/>
    <property type="match status" value="1"/>
</dbReference>
<dbReference type="InterPro" id="IPR050491">
    <property type="entry name" value="Bact_CellWall_Synth/Modif"/>
</dbReference>
<dbReference type="InterPro" id="IPR001466">
    <property type="entry name" value="Beta-lactam-related"/>
</dbReference>
<dbReference type="InterPro" id="IPR012338">
    <property type="entry name" value="Beta-lactam/transpept-like"/>
</dbReference>
<dbReference type="PANTHER" id="PTHR46825">
    <property type="entry name" value="D-ALANYL-D-ALANINE-CARBOXYPEPTIDASE/ENDOPEPTIDASE AMPH"/>
    <property type="match status" value="1"/>
</dbReference>
<dbReference type="PANTHER" id="PTHR46825:SF11">
    <property type="entry name" value="PENICILLIN-BINDING PROTEIN 4"/>
    <property type="match status" value="1"/>
</dbReference>
<dbReference type="Pfam" id="PF00144">
    <property type="entry name" value="Beta-lactamase"/>
    <property type="match status" value="1"/>
</dbReference>
<dbReference type="SUPFAM" id="SSF56601">
    <property type="entry name" value="beta-lactamase/transpeptidase-like"/>
    <property type="match status" value="1"/>
</dbReference>
<organism>
    <name type="scientific">Staphylococcus aureus (strain NCTC 8325 / PS 47)</name>
    <dbReference type="NCBI Taxonomy" id="93061"/>
    <lineage>
        <taxon>Bacteria</taxon>
        <taxon>Bacillati</taxon>
        <taxon>Bacillota</taxon>
        <taxon>Bacilli</taxon>
        <taxon>Bacillales</taxon>
        <taxon>Staphylococcaceae</taxon>
        <taxon>Staphylococcus</taxon>
    </lineage>
</organism>
<accession>Q2FVH6</accession>
<feature type="chain" id="PRO_0000247952" description="Protein flp">
    <location>
        <begin position="1"/>
        <end position="498"/>
    </location>
</feature>
<feature type="transmembrane region" description="Helical" evidence="1">
    <location>
        <begin position="6"/>
        <end position="26"/>
    </location>
</feature>
<feature type="transmembrane region" description="Helical" evidence="1">
    <location>
        <begin position="389"/>
        <end position="409"/>
    </location>
</feature>
<feature type="transmembrane region" description="Helical" evidence="1">
    <location>
        <begin position="433"/>
        <end position="453"/>
    </location>
</feature>
<feature type="transmembrane region" description="Helical" evidence="1">
    <location>
        <begin position="471"/>
        <end position="491"/>
    </location>
</feature>
<reference key="1">
    <citation type="book" date="2006" name="Gram positive pathogens, 2nd edition">
        <title>The Staphylococcus aureus NCTC 8325 genome.</title>
        <editorList>
            <person name="Fischetti V."/>
            <person name="Novick R."/>
            <person name="Ferretti J."/>
            <person name="Portnoy D."/>
            <person name="Rood J."/>
        </editorList>
        <authorList>
            <person name="Gillaspy A.F."/>
            <person name="Worrell V."/>
            <person name="Orvis J."/>
            <person name="Roe B.A."/>
            <person name="Dyer D.W."/>
            <person name="Iandolo J.J."/>
        </authorList>
    </citation>
    <scope>NUCLEOTIDE SEQUENCE [LARGE SCALE GENOMIC DNA]</scope>
    <source>
        <strain>NCTC 8325 / PS 47</strain>
    </source>
</reference>
<reference key="2">
    <citation type="journal article" date="2000" name="FEMS Microbiol. Lett.">
        <title>Identification of a fmtA-like gene that has similarity to other PBPs and beta-lactamases in Staphylococcus aureus.</title>
        <authorList>
            <person name="Komatsuzawa H."/>
            <person name="Choi G.H."/>
            <person name="Fujiwara T."/>
            <person name="Huang Y."/>
            <person name="Ohta K."/>
            <person name="Sugai M."/>
            <person name="Suginaka H."/>
        </authorList>
    </citation>
    <scope>FUNCTION</scope>
</reference>
<proteinExistence type="predicted"/>
<sequence>MTTKKLYFLSISIIILVAISIAIYITLNSNTKTRLTNDSQQQIDTIIEHDLQKGHIPGASILIVKNGKVFLNKGYGYQDVDKKVKASPTTKYEIASNTKAFTGLAILKLAQEGRLNLNDAVSKHVPHFKMNYNGQNETITIKQLLAQTSGIPSDITSEDSVTSKNNRLNDVTHAIMGDELHHKPGEEFEYSNMNYDLLGLIIQNVTKQSYTKYITNSWLKPLHMTHTSFKQTNYKSKHDAIGYELQGSTPVVSKPEFNLWDTPSAYMMTSTEDLEHWIKFQLNPPDKYKSLVQQSHKNLSSTIGEPNANAYASGWFTNNDEHLVFHSGTLDNFSSFILLNPKQNYGIVVLANLNSEYVPKLVEHLNTQIVNHKRYSTVASMLNQYKDQFNIVTVLMTTLILLAFIFSAYRAWQMRHGQILLRRSKRIAVLSWLSLCICIALALILYALPYLILGSNNWSFVLTWLPIEIKLALITTLIALFSTLIVILLFLHTKITKT</sequence>